<proteinExistence type="inferred from homology"/>
<organism>
    <name type="scientific">Ateles geoffroyi</name>
    <name type="common">Black-handed spider monkey</name>
    <name type="synonym">Geoffroy's spider monkey</name>
    <dbReference type="NCBI Taxonomy" id="9509"/>
    <lineage>
        <taxon>Eukaryota</taxon>
        <taxon>Metazoa</taxon>
        <taxon>Chordata</taxon>
        <taxon>Craniata</taxon>
        <taxon>Vertebrata</taxon>
        <taxon>Euteleostomi</taxon>
        <taxon>Mammalia</taxon>
        <taxon>Eutheria</taxon>
        <taxon>Euarchontoglires</taxon>
        <taxon>Primates</taxon>
        <taxon>Haplorrhini</taxon>
        <taxon>Platyrrhini</taxon>
        <taxon>Atelidae</taxon>
        <taxon>Atelinae</taxon>
        <taxon>Ateles</taxon>
    </lineage>
</organism>
<reference key="1">
    <citation type="submission" date="2006-09" db="EMBL/GenBank/DDBJ databases">
        <title>NISC comparative sequencing initiative.</title>
        <authorList>
            <person name="Antonellis A."/>
            <person name="Ayele K."/>
            <person name="Benjamin B."/>
            <person name="Blakesley R.W."/>
            <person name="Boakye A."/>
            <person name="Bouffard G.G."/>
            <person name="Brinkley C."/>
            <person name="Brooks S."/>
            <person name="Chu G."/>
            <person name="Coleman H."/>
            <person name="Engle J."/>
            <person name="Gestole M."/>
            <person name="Greene A."/>
            <person name="Guan X."/>
            <person name="Gupta J."/>
            <person name="Haghighi P."/>
            <person name="Han J."/>
            <person name="Hansen N."/>
            <person name="Ho S.-L."/>
            <person name="Hu P."/>
            <person name="Hunter G."/>
            <person name="Hurle B."/>
            <person name="Idol J.R."/>
            <person name="Kwong P."/>
            <person name="Laric P."/>
            <person name="Larson S."/>
            <person name="Lee-Lin S.-Q."/>
            <person name="Legaspi R."/>
            <person name="Madden M."/>
            <person name="Maduro Q.L."/>
            <person name="Maduro V.B."/>
            <person name="Margulies E.H."/>
            <person name="Masiello C."/>
            <person name="Maskeri B."/>
            <person name="McDowell J."/>
            <person name="Mojidi H.A."/>
            <person name="Mullikin J.C."/>
            <person name="Oestreicher J.S."/>
            <person name="Park M."/>
            <person name="Portnoy M.E."/>
            <person name="Prasad A."/>
            <person name="Puri O."/>
            <person name="Reddix-Dugue N."/>
            <person name="Schandler K."/>
            <person name="Schueler M.G."/>
            <person name="Sison C."/>
            <person name="Stantripop S."/>
            <person name="Stephen E."/>
            <person name="Taye A."/>
            <person name="Thomas J.W."/>
            <person name="Thomas P.J."/>
            <person name="Tsipouri V."/>
            <person name="Ung L."/>
            <person name="Vogt J.L."/>
            <person name="Wetherby K.D."/>
            <person name="Young A."/>
            <person name="Green E.D."/>
        </authorList>
    </citation>
    <scope>NUCLEOTIDE SEQUENCE [LARGE SCALE GENOMIC DNA]</scope>
</reference>
<comment type="function">
    <text evidence="1 2">Epithelial ion channel that plays an important role in the regulation of epithelial ion and water transport and fluid homeostasis. Mediates the transport of chloride ions across the cell membrane (By similarity). Possesses an intrinsic ATPase activity and utilizes ATP to gate its channel; the passive flow of anions through the channel is gated by cycles of ATP binding and hydrolysis by the ATP-binding domains (By similarity). The ion channel is also permeable to HCO(3)(-); selectivity depends on the extracellular chloride concentration. Exerts its function also by modulating the activity of other ion channels and transporters. Contributes to the regulation of the pH and the ion content of the epithelial fluid layer. Modulates the activity of the epithelial sodium channel (ENaC) complex, in part by regulating the cell surface expression of the ENaC complex. May regulate bicarbonate secretion and salvage in epithelial cells by regulating the transporter SLC4A7. Can inhibit the chloride channel activity of ANO1 (By similarity). Plays a role in the chloride and bicarbonate homeostasis during sperm epididymal maturation and capacitation (By similarity).</text>
</comment>
<comment type="catalytic activity">
    <reaction evidence="1">
        <text>ATP + H2O + closed Cl(-) channel = ADP + phosphate + open Cl(-) channel.</text>
        <dbReference type="EC" id="5.6.1.6"/>
    </reaction>
</comment>
<comment type="catalytic activity">
    <reaction evidence="1">
        <text>chloride(in) = chloride(out)</text>
        <dbReference type="Rhea" id="RHEA:29823"/>
        <dbReference type="ChEBI" id="CHEBI:17996"/>
    </reaction>
</comment>
<comment type="catalytic activity">
    <reaction evidence="1">
        <text>hydrogencarbonate(in) = hydrogencarbonate(out)</text>
        <dbReference type="Rhea" id="RHEA:28695"/>
        <dbReference type="ChEBI" id="CHEBI:17544"/>
    </reaction>
</comment>
<comment type="catalytic activity">
    <reaction evidence="1">
        <text>ATP + H2O = ADP + phosphate + H(+)</text>
        <dbReference type="Rhea" id="RHEA:13065"/>
        <dbReference type="ChEBI" id="CHEBI:15377"/>
        <dbReference type="ChEBI" id="CHEBI:15378"/>
        <dbReference type="ChEBI" id="CHEBI:30616"/>
        <dbReference type="ChEBI" id="CHEBI:43474"/>
        <dbReference type="ChEBI" id="CHEBI:456216"/>
    </reaction>
    <physiologicalReaction direction="left-to-right" evidence="1">
        <dbReference type="Rhea" id="RHEA:13066"/>
    </physiologicalReaction>
</comment>
<comment type="subunit">
    <text evidence="1 2 3">Monomer; does not require oligomerization for channel activity. May form oligomers in the membrane (By similarity). Interacts with SLC26A3, SLC26A6 and NHERF1 (By similarity). Interacts with SHANK2 (By similarity). Interacts with MYO6 (By similarity). Interacts (via C-terminus) with GOPC (via PDZ domain); this promotes CFTR internalization and thereby decreases channel activity. Interacts with SLC4A7 through NHERF1. Found in a complex with MYO5B and RAB11A. Interacts with ANO1. Interacts with SLC26A8 (By similarity). Interacts with AHCYL1; the interaction increases CFTR activity (By similarity). Interacts with CSE1L (By similarity). The core-glycosylated form interacts with GORASP2 (via PDZ GRASP-type 1 domain) in respone to ER stress (By similarity). Interacts with MARCHF2; the interaction leads to CFTR ubiqtuitination and degradation (By similarity). Interacts with ADGRG2 (By similarity).</text>
</comment>
<comment type="subcellular location">
    <subcellularLocation>
        <location evidence="2">Apical cell membrane</location>
        <topology evidence="1">Multi-pass membrane protein</topology>
    </subcellularLocation>
    <subcellularLocation>
        <location evidence="1">Early endosome membrane</location>
        <topology evidence="1">Multi-pass membrane protein</topology>
    </subcellularLocation>
    <subcellularLocation>
        <location evidence="2">Cell membrane</location>
        <topology evidence="1">Multi-pass membrane protein</topology>
    </subcellularLocation>
    <subcellularLocation>
        <location evidence="1">Recycling endosome membrane</location>
        <topology evidence="1">Multi-pass membrane protein</topology>
    </subcellularLocation>
    <subcellularLocation>
        <location evidence="1">Endoplasmic reticulum membrane</location>
        <topology evidence="1">Multi-pass membrane protein</topology>
    </subcellularLocation>
    <subcellularLocation>
        <location evidence="3">Nucleus</location>
    </subcellularLocation>
    <text evidence="1 3">The channel is internalized from the cell surface into an endosomal recycling compartment, from where it is recycled to the cell membrane. In the oviduct and bronchus, detected on the apical side of epithelial cells, but not associated with cilia. In Sertoli cells, a processed product is detected in the nucleus. ER stress induces GORASP2-mediated unconventional (ER/Golgi-independent) trafficking of core-glycosylated CFTR to cell membrane.</text>
</comment>
<comment type="domain">
    <text evidence="1 2">Binds and hydrolyzes ATP via the two cytoplasmic ABC transporter nucleotide-binding domains. The two ATP-binding domains interact with each other, forming a head-to-tail dimer. Normal ATPase activity requires interaction between the two domains. The first ABC transporter nucleotide-binding domain has no ATPase activity by itself.</text>
</comment>
<comment type="domain">
    <text evidence="1">The PDZ-binding motif mediates interactions with GOPC and with the SLC4A7, NHERF1/EBP50 complex.</text>
</comment>
<comment type="domain">
    <text evidence="1">The disordered R region mediates channel activation when it is phosphorylated, but not in the absence of phosphorylation.</text>
</comment>
<comment type="PTM">
    <text evidence="1">N-glycosylated.</text>
</comment>
<comment type="PTM">
    <text evidence="1">Phosphorylated; cAMP treatment promotes phosphorylation and activates the channel. Dephosphorylation decreases the ATPase activity (in vitro). Phosphorylation at PKA sites activates the channel. Phosphorylation at PKC sites enhances the response to phosphorylation by PKA. Phosphorylated by AMPK; this inhibits channel activity.</text>
</comment>
<comment type="PTM">
    <text evidence="1">Ubiquitinated, leading to its degradation in the lysosome. Deubiquitination by USP10 in early endosomes enhances its endocytic recycling to the cell membrane. Ubiquitinated by RNF185 during ER stress. Ubiquitinated by MARCHF2 (By similarity).</text>
</comment>
<comment type="similarity">
    <text evidence="8">Belongs to the ABC transporter superfamily. ABCC family. CFTR transporter (TC 3.A.1.202) subfamily.</text>
</comment>
<keyword id="KW-0067">ATP-binding</keyword>
<keyword id="KW-1003">Cell membrane</keyword>
<keyword id="KW-0868">Chloride</keyword>
<keyword id="KW-0869">Chloride channel</keyword>
<keyword id="KW-0256">Endoplasmic reticulum</keyword>
<keyword id="KW-0967">Endosome</keyword>
<keyword id="KW-0325">Glycoprotein</keyword>
<keyword id="KW-0407">Ion channel</keyword>
<keyword id="KW-0406">Ion transport</keyword>
<keyword id="KW-0413">Isomerase</keyword>
<keyword id="KW-1017">Isopeptide bond</keyword>
<keyword id="KW-0449">Lipoprotein</keyword>
<keyword id="KW-0472">Membrane</keyword>
<keyword id="KW-0547">Nucleotide-binding</keyword>
<keyword id="KW-0539">Nucleus</keyword>
<keyword id="KW-0564">Palmitate</keyword>
<keyword id="KW-0597">Phosphoprotein</keyword>
<keyword id="KW-0677">Repeat</keyword>
<keyword id="KW-0812">Transmembrane</keyword>
<keyword id="KW-1133">Transmembrane helix</keyword>
<keyword id="KW-0813">Transport</keyword>
<keyword id="KW-0832">Ubl conjugation</keyword>
<sequence>MQRSPLEKASVVSKLFFSWTRPILKKGYRQRLELSDIYQIPSANSADNLSEKLEREWDRELASKKNPKLINALRRCFFWRFMFYGILLYLGEVTKAVQPLLLGRIIASYDPDNKTERSIAIYLGIGLCLLFIVRTLLLHPAIFGLHHIGMQMRIAMFSLIYKKTLKLSSRVLDKISIGQLVSLLSNNLNKFDEGLALAHFVWIAPLQVALLMGLIWELLQASAFCGLGFLIVLALFQAGLGRMMMKYRDQRAGKINERLVITSEMIENIQSVKAYCWEEAMEKMIENLRQTELKLTRKAAYVRYFNSSAFFFSGFFVVFLSVLPYALIKGIVLRKIFTTISFCIVLRMAVTRQFPWAVQTWYDSLGAINKIQDFLQKQEYKTLEYNLTTTEVVMENVTAFWEEGFGELFEKAKQNSNNRKTSNGDDNLFFSNFSLLGTPVLKDINFKIERGQLLAVAGSTGAGKTSLLMMIMGELEPSEGKIKHSGRISFCSQFSWIMPGTIKENIIFGVSYDEYRYRSVIKACQLEEDISKFAAKDNIVLGEGGITLSGGQRARISLARAVYKDADLYLLDSPFGYLDVLTEKEIFESCVCKLMANKTRILVTSKMEHLKKADKILILHEGSSYFYGTFSELQNLRPDFSSKLMGYDSFDQFSSERRNSILTETLRRFSLEGDAPVSWTETKKQSFKQTGELGDKRKNSILNSINSIRKFSIVQKTPLQMNGIEENSDEPLERRLSLVPDSEQGEAILPRISVINTGPALQLRRRQSVLNMMTHSVNQGQSVHRKTTASTRKVSLAPQANLTELDIYSRRLSQETGLEISEEINEEDLKECFFDNMESIPAVTTWNTYLRYITLHKSLIFVLIWCLVIFLAEVAASLVVLWFLGNTPFQDKGNSTYSRNNSYAVIITNTSSYYVFYIYVGVADTLLALGFFRGLPLVHTLITVSKILHHKMLHSVLQAPMSTLNTLKAGGILNRFSKDIAILDDLLPLTIFDFIQLLLIVIGAIAVVSVLQPYILLATVPVIAAFILLRAYFLQTSQQLKQLESAGRSPIFTHLVTSLKGLWTIRAFGRQPYFETLFHKALNLHTANWFLYLATLRWFQMRIEIIFVIFFIAVTFISILTTGEGEGTVGIILTLAMNIMSTLQWAVNSSIDVDSLMRSVSRVFKFIDMPTEGKPTKSTKAYKNGQLSKVMIIENSHVKKNDIWPSGGQMTIKDLTAKYIEGGNAILENISFSISPGQRVGLLGRTGSGKSTLLSAFLRLLNTEGEIQIDGVSWDSITLQQWRKAFGVIPQKVFIFTGTFRKNLDPYEQWSDQEIWKVADEVGLRSVIEQFPGKLDFVLVDGGCVLSHGHKQLMCLARSVLSKAKILLLDEPSAHLDPVTYQIIRRALKQAFADCTVILCEHRIEAMLECQQFLVIEENKVRQYDSIQKLLNEKSLFQQAISHSDRVKLFPHRNSSKYKSPPQIASLKEETEEEVQETRL</sequence>
<evidence type="ECO:0000250" key="1">
    <source>
        <dbReference type="UniProtKB" id="P13569"/>
    </source>
</evidence>
<evidence type="ECO:0000250" key="2">
    <source>
        <dbReference type="UniProtKB" id="P26361"/>
    </source>
</evidence>
<evidence type="ECO:0000250" key="3">
    <source>
        <dbReference type="UniProtKB" id="P34158"/>
    </source>
</evidence>
<evidence type="ECO:0000255" key="4"/>
<evidence type="ECO:0000255" key="5">
    <source>
        <dbReference type="PROSITE-ProRule" id="PRU00434"/>
    </source>
</evidence>
<evidence type="ECO:0000255" key="6">
    <source>
        <dbReference type="PROSITE-ProRule" id="PRU00441"/>
    </source>
</evidence>
<evidence type="ECO:0000256" key="7">
    <source>
        <dbReference type="SAM" id="MobiDB-lite"/>
    </source>
</evidence>
<evidence type="ECO:0000305" key="8"/>
<protein>
    <recommendedName>
        <fullName evidence="1">Cystic fibrosis transmembrane conductance regulator</fullName>
        <shortName>CFTR</shortName>
    </recommendedName>
    <alternativeName>
        <fullName>ATP-binding cassette sub-family C member 7</fullName>
    </alternativeName>
    <alternativeName>
        <fullName>Channel conductance-controlling ATPase</fullName>
        <ecNumber evidence="1">5.6.1.6</ecNumber>
    </alternativeName>
    <alternativeName>
        <fullName>cAMP-dependent chloride channel</fullName>
    </alternativeName>
</protein>
<dbReference type="EC" id="5.6.1.6" evidence="1"/>
<dbReference type="EMBL" id="DP000177">
    <property type="protein sequence ID" value="ABI75275.1"/>
    <property type="molecule type" value="Genomic_DNA"/>
</dbReference>
<dbReference type="SMR" id="Q09YK5"/>
<dbReference type="GlyCosmos" id="Q09YK5">
    <property type="glycosylation" value="3 sites, No reported glycans"/>
</dbReference>
<dbReference type="GO" id="GO:0016324">
    <property type="term" value="C:apical plasma membrane"/>
    <property type="evidence" value="ECO:0000250"/>
    <property type="project" value="UniProtKB"/>
</dbReference>
<dbReference type="GO" id="GO:0034707">
    <property type="term" value="C:chloride channel complex"/>
    <property type="evidence" value="ECO:0007669"/>
    <property type="project" value="UniProtKB-KW"/>
</dbReference>
<dbReference type="GO" id="GO:0005829">
    <property type="term" value="C:cytosol"/>
    <property type="evidence" value="ECO:0007669"/>
    <property type="project" value="TreeGrafter"/>
</dbReference>
<dbReference type="GO" id="GO:0005769">
    <property type="term" value="C:early endosome"/>
    <property type="evidence" value="ECO:0000250"/>
    <property type="project" value="UniProtKB"/>
</dbReference>
<dbReference type="GO" id="GO:0031901">
    <property type="term" value="C:early endosome membrane"/>
    <property type="evidence" value="ECO:0007669"/>
    <property type="project" value="UniProtKB-SubCell"/>
</dbReference>
<dbReference type="GO" id="GO:0005789">
    <property type="term" value="C:endoplasmic reticulum membrane"/>
    <property type="evidence" value="ECO:0000250"/>
    <property type="project" value="UniProtKB"/>
</dbReference>
<dbReference type="GO" id="GO:0016020">
    <property type="term" value="C:membrane"/>
    <property type="evidence" value="ECO:0000250"/>
    <property type="project" value="UniProtKB"/>
</dbReference>
<dbReference type="GO" id="GO:0005634">
    <property type="term" value="C:nucleus"/>
    <property type="evidence" value="ECO:0000250"/>
    <property type="project" value="UniProtKB"/>
</dbReference>
<dbReference type="GO" id="GO:0005886">
    <property type="term" value="C:plasma membrane"/>
    <property type="evidence" value="ECO:0000250"/>
    <property type="project" value="UniProtKB"/>
</dbReference>
<dbReference type="GO" id="GO:0055038">
    <property type="term" value="C:recycling endosome membrane"/>
    <property type="evidence" value="ECO:0007669"/>
    <property type="project" value="UniProtKB-SubCell"/>
</dbReference>
<dbReference type="GO" id="GO:0140359">
    <property type="term" value="F:ABC-type transporter activity"/>
    <property type="evidence" value="ECO:0007669"/>
    <property type="project" value="InterPro"/>
</dbReference>
<dbReference type="GO" id="GO:0005524">
    <property type="term" value="F:ATP binding"/>
    <property type="evidence" value="ECO:0007669"/>
    <property type="project" value="UniProtKB-KW"/>
</dbReference>
<dbReference type="GO" id="GO:0016887">
    <property type="term" value="F:ATP hydrolysis activity"/>
    <property type="evidence" value="ECO:0000250"/>
    <property type="project" value="UniProtKB"/>
</dbReference>
<dbReference type="GO" id="GO:0015106">
    <property type="term" value="F:bicarbonate transmembrane transporter activity"/>
    <property type="evidence" value="ECO:0000250"/>
    <property type="project" value="UniProtKB"/>
</dbReference>
<dbReference type="GO" id="GO:0005254">
    <property type="term" value="F:chloride channel activity"/>
    <property type="evidence" value="ECO:0000250"/>
    <property type="project" value="UniProtKB"/>
</dbReference>
<dbReference type="GO" id="GO:0019869">
    <property type="term" value="F:chloride channel inhibitor activity"/>
    <property type="evidence" value="ECO:0000250"/>
    <property type="project" value="UniProtKB"/>
</dbReference>
<dbReference type="GO" id="GO:0015108">
    <property type="term" value="F:chloride transmembrane transporter activity"/>
    <property type="evidence" value="ECO:0000250"/>
    <property type="project" value="UniProtKB"/>
</dbReference>
<dbReference type="GO" id="GO:0005260">
    <property type="term" value="F:intracellularly ATP-gated chloride channel activity"/>
    <property type="evidence" value="ECO:0000250"/>
    <property type="project" value="UniProtKB"/>
</dbReference>
<dbReference type="GO" id="GO:0015701">
    <property type="term" value="P:bicarbonate transport"/>
    <property type="evidence" value="ECO:0000250"/>
    <property type="project" value="UniProtKB"/>
</dbReference>
<dbReference type="GO" id="GO:0071320">
    <property type="term" value="P:cellular response to cAMP"/>
    <property type="evidence" value="ECO:0000250"/>
    <property type="project" value="UniProtKB"/>
</dbReference>
<dbReference type="GO" id="GO:1904322">
    <property type="term" value="P:cellular response to forskolin"/>
    <property type="evidence" value="ECO:0000250"/>
    <property type="project" value="UniProtKB"/>
</dbReference>
<dbReference type="GO" id="GO:1902476">
    <property type="term" value="P:chloride transmembrane transport"/>
    <property type="evidence" value="ECO:0000250"/>
    <property type="project" value="UniProtKB"/>
</dbReference>
<dbReference type="GO" id="GO:0051454">
    <property type="term" value="P:intracellular pH elevation"/>
    <property type="evidence" value="ECO:0000250"/>
    <property type="project" value="UniProtKB"/>
</dbReference>
<dbReference type="GO" id="GO:0060081">
    <property type="term" value="P:membrane hyperpolarization"/>
    <property type="evidence" value="ECO:0000250"/>
    <property type="project" value="UniProtKB"/>
</dbReference>
<dbReference type="GO" id="GO:0050891">
    <property type="term" value="P:multicellular organismal-level water homeostasis"/>
    <property type="evidence" value="ECO:0000250"/>
    <property type="project" value="UniProtKB"/>
</dbReference>
<dbReference type="GO" id="GO:0034976">
    <property type="term" value="P:response to endoplasmic reticulum stress"/>
    <property type="evidence" value="ECO:0000250"/>
    <property type="project" value="UniProtKB"/>
</dbReference>
<dbReference type="GO" id="GO:0048240">
    <property type="term" value="P:sperm capacitation"/>
    <property type="evidence" value="ECO:0000250"/>
    <property type="project" value="UniProtKB"/>
</dbReference>
<dbReference type="GO" id="GO:0035377">
    <property type="term" value="P:transepithelial water transport"/>
    <property type="evidence" value="ECO:0000250"/>
    <property type="project" value="UniProtKB"/>
</dbReference>
<dbReference type="CDD" id="cd18594">
    <property type="entry name" value="ABC_6TM_CFTR_D1"/>
    <property type="match status" value="1"/>
</dbReference>
<dbReference type="CDD" id="cd18600">
    <property type="entry name" value="ABC_6TM_CFTR_D2"/>
    <property type="match status" value="1"/>
</dbReference>
<dbReference type="CDD" id="cd03291">
    <property type="entry name" value="ABCC_CFTR1"/>
    <property type="match status" value="1"/>
</dbReference>
<dbReference type="CDD" id="cd03289">
    <property type="entry name" value="ABCC_CFTR2"/>
    <property type="match status" value="1"/>
</dbReference>
<dbReference type="FunFam" id="1.20.1560.10:FF:000017">
    <property type="entry name" value="Cystic fibrosis transmembrane conductance regulator"/>
    <property type="match status" value="1"/>
</dbReference>
<dbReference type="FunFam" id="1.20.1560.10:FF:000019">
    <property type="entry name" value="Cystic fibrosis transmembrane conductance regulator"/>
    <property type="match status" value="1"/>
</dbReference>
<dbReference type="FunFam" id="3.40.50.300:FF:000581">
    <property type="entry name" value="Cystic fibrosis transmembrane conductance regulator"/>
    <property type="match status" value="1"/>
</dbReference>
<dbReference type="FunFam" id="3.40.50.300:FF:000591">
    <property type="entry name" value="Cystic fibrosis transmembrane conductance regulator"/>
    <property type="match status" value="1"/>
</dbReference>
<dbReference type="Gene3D" id="1.20.1560.10">
    <property type="entry name" value="ABC transporter type 1, transmembrane domain"/>
    <property type="match status" value="2"/>
</dbReference>
<dbReference type="Gene3D" id="3.40.50.300">
    <property type="entry name" value="P-loop containing nucleotide triphosphate hydrolases"/>
    <property type="match status" value="2"/>
</dbReference>
<dbReference type="InterPro" id="IPR003593">
    <property type="entry name" value="AAA+_ATPase"/>
</dbReference>
<dbReference type="InterPro" id="IPR011527">
    <property type="entry name" value="ABC1_TM_dom"/>
</dbReference>
<dbReference type="InterPro" id="IPR036640">
    <property type="entry name" value="ABC1_TM_sf"/>
</dbReference>
<dbReference type="InterPro" id="IPR003439">
    <property type="entry name" value="ABC_transporter-like_ATP-bd"/>
</dbReference>
<dbReference type="InterPro" id="IPR017871">
    <property type="entry name" value="ABC_transporter-like_CS"/>
</dbReference>
<dbReference type="InterPro" id="IPR050173">
    <property type="entry name" value="ABC_transporter_C-like"/>
</dbReference>
<dbReference type="InterPro" id="IPR009147">
    <property type="entry name" value="CFTR/ABCC7"/>
</dbReference>
<dbReference type="InterPro" id="IPR047082">
    <property type="entry name" value="CFTR1_ATP-bd_dom1"/>
</dbReference>
<dbReference type="InterPro" id="IPR025837">
    <property type="entry name" value="CFTR_reg_dom"/>
</dbReference>
<dbReference type="InterPro" id="IPR027417">
    <property type="entry name" value="P-loop_NTPase"/>
</dbReference>
<dbReference type="NCBIfam" id="TIGR01271">
    <property type="entry name" value="CFTR_protein"/>
    <property type="match status" value="1"/>
</dbReference>
<dbReference type="PANTHER" id="PTHR24223">
    <property type="entry name" value="ATP-BINDING CASSETTE SUB-FAMILY C"/>
    <property type="match status" value="1"/>
</dbReference>
<dbReference type="PANTHER" id="PTHR24223:SF19">
    <property type="entry name" value="CYSTIC FIBROSIS TRANSMEMBRANE CONDUCTANCE REGULATOR"/>
    <property type="match status" value="1"/>
</dbReference>
<dbReference type="Pfam" id="PF00664">
    <property type="entry name" value="ABC_membrane"/>
    <property type="match status" value="2"/>
</dbReference>
<dbReference type="Pfam" id="PF00005">
    <property type="entry name" value="ABC_tran"/>
    <property type="match status" value="2"/>
</dbReference>
<dbReference type="Pfam" id="PF14396">
    <property type="entry name" value="CFTR_R"/>
    <property type="match status" value="1"/>
</dbReference>
<dbReference type="PRINTS" id="PR01851">
    <property type="entry name" value="CYSFIBREGLTR"/>
</dbReference>
<dbReference type="SMART" id="SM00382">
    <property type="entry name" value="AAA"/>
    <property type="match status" value="2"/>
</dbReference>
<dbReference type="SUPFAM" id="SSF90123">
    <property type="entry name" value="ABC transporter transmembrane region"/>
    <property type="match status" value="2"/>
</dbReference>
<dbReference type="SUPFAM" id="SSF52540">
    <property type="entry name" value="P-loop containing nucleoside triphosphate hydrolases"/>
    <property type="match status" value="2"/>
</dbReference>
<dbReference type="PROSITE" id="PS50929">
    <property type="entry name" value="ABC_TM1F"/>
    <property type="match status" value="2"/>
</dbReference>
<dbReference type="PROSITE" id="PS00211">
    <property type="entry name" value="ABC_TRANSPORTER_1"/>
    <property type="match status" value="1"/>
</dbReference>
<dbReference type="PROSITE" id="PS50893">
    <property type="entry name" value="ABC_TRANSPORTER_2"/>
    <property type="match status" value="2"/>
</dbReference>
<gene>
    <name evidence="1" type="primary">CFTR</name>
    <name type="synonym">ABCC7</name>
</gene>
<name>CFTR_ATEGE</name>
<feature type="chain" id="PRO_0000260770" description="Cystic fibrosis transmembrane conductance regulator">
    <location>
        <begin position="1"/>
        <end position="1480"/>
    </location>
</feature>
<feature type="topological domain" description="Cytoplasmic" evidence="1">
    <location>
        <begin position="1"/>
        <end position="77"/>
    </location>
</feature>
<feature type="transmembrane region" description="Helical; Name=1" evidence="1">
    <location>
        <begin position="78"/>
        <end position="98"/>
    </location>
</feature>
<feature type="topological domain" description="Extracellular" evidence="1">
    <location>
        <begin position="99"/>
        <end position="122"/>
    </location>
</feature>
<feature type="transmembrane region" description="Helical; Name=2" evidence="1">
    <location>
        <begin position="123"/>
        <end position="146"/>
    </location>
</feature>
<feature type="topological domain" description="Cytoplasmic" evidence="1">
    <location>
        <begin position="147"/>
        <end position="195"/>
    </location>
</feature>
<feature type="transmembrane region" description="Helical; Name=3" evidence="1">
    <location>
        <begin position="196"/>
        <end position="216"/>
    </location>
</feature>
<feature type="topological domain" description="Extracellular" evidence="1">
    <location>
        <begin position="217"/>
        <end position="222"/>
    </location>
</feature>
<feature type="transmembrane region" description="Helical; Name=4" evidence="1">
    <location>
        <begin position="223"/>
        <end position="243"/>
    </location>
</feature>
<feature type="topological domain" description="Cytoplasmic" evidence="1">
    <location>
        <begin position="244"/>
        <end position="298"/>
    </location>
</feature>
<feature type="transmembrane region" description="Helical; Name=5" evidence="1">
    <location>
        <begin position="299"/>
        <end position="319"/>
    </location>
</feature>
<feature type="topological domain" description="Extracellular" evidence="1">
    <location>
        <begin position="320"/>
        <end position="339"/>
    </location>
</feature>
<feature type="transmembrane region" description="Helical; Name=6" evidence="1">
    <location>
        <begin position="340"/>
        <end position="358"/>
    </location>
</feature>
<feature type="topological domain" description="Cytoplasmic" evidence="1">
    <location>
        <begin position="359"/>
        <end position="858"/>
    </location>
</feature>
<feature type="transmembrane region" description="Helical; Name=7" evidence="1">
    <location>
        <begin position="859"/>
        <end position="879"/>
    </location>
</feature>
<feature type="topological domain" description="Extracellular" evidence="1">
    <location>
        <begin position="880"/>
        <end position="918"/>
    </location>
</feature>
<feature type="transmembrane region" description="Discontinuously helical; Name=8" evidence="1">
    <location>
        <begin position="919"/>
        <end position="939"/>
    </location>
</feature>
<feature type="topological domain" description="Cytoplasmic" evidence="1">
    <location>
        <begin position="940"/>
        <end position="990"/>
    </location>
</feature>
<feature type="transmembrane region" description="Helical; Name=9" evidence="1">
    <location>
        <begin position="991"/>
        <end position="1011"/>
    </location>
</feature>
<feature type="topological domain" description="Extracellular" evidence="1">
    <location>
        <begin position="1012"/>
        <end position="1013"/>
    </location>
</feature>
<feature type="transmembrane region" description="Helical; Name=10" evidence="1">
    <location>
        <begin position="1014"/>
        <end position="1034"/>
    </location>
</feature>
<feature type="topological domain" description="Cytoplasmic" evidence="1">
    <location>
        <begin position="1035"/>
        <end position="1095"/>
    </location>
</feature>
<feature type="transmembrane region" description="Helical; Name=11" evidence="1">
    <location>
        <begin position="1096"/>
        <end position="1116"/>
    </location>
</feature>
<feature type="topological domain" description="Extracellular" evidence="1">
    <location>
        <begin position="1117"/>
        <end position="1130"/>
    </location>
</feature>
<feature type="transmembrane region" description="Helical; Name=12" evidence="1">
    <location>
        <begin position="1131"/>
        <end position="1151"/>
    </location>
</feature>
<feature type="topological domain" description="Cytoplasmic" evidence="1">
    <location>
        <begin position="1152"/>
        <end position="1480"/>
    </location>
</feature>
<feature type="domain" description="ABC transmembrane type-1 1" evidence="6">
    <location>
        <begin position="81"/>
        <end position="365"/>
    </location>
</feature>
<feature type="domain" description="ABC transporter 1" evidence="5">
    <location>
        <begin position="423"/>
        <end position="646"/>
    </location>
</feature>
<feature type="domain" description="ABC transmembrane type-1 2" evidence="6">
    <location>
        <begin position="859"/>
        <end position="1155"/>
    </location>
</feature>
<feature type="domain" description="ABC transporter 2" evidence="5">
    <location>
        <begin position="1210"/>
        <end position="1443"/>
    </location>
</feature>
<feature type="region of interest" description="Disordered R region" evidence="1">
    <location>
        <begin position="654"/>
        <end position="831"/>
    </location>
</feature>
<feature type="region of interest" description="Interaction with GORASP2" evidence="1">
    <location>
        <begin position="1386"/>
        <end position="1480"/>
    </location>
</feature>
<feature type="region of interest" description="Disordered" evidence="7">
    <location>
        <begin position="1452"/>
        <end position="1480"/>
    </location>
</feature>
<feature type="short sequence motif" description="PDZ-binding" evidence="1">
    <location>
        <begin position="1478"/>
        <end position="1480"/>
    </location>
</feature>
<feature type="compositionally biased region" description="Acidic residues" evidence="7">
    <location>
        <begin position="1470"/>
        <end position="1480"/>
    </location>
</feature>
<feature type="binding site" evidence="1">
    <location>
        <position position="401"/>
    </location>
    <ligand>
        <name>ATP</name>
        <dbReference type="ChEBI" id="CHEBI:30616"/>
        <label>1</label>
    </ligand>
</feature>
<feature type="binding site" evidence="1">
    <location>
        <position position="434"/>
    </location>
    <ligand>
        <name>ATP</name>
        <dbReference type="ChEBI" id="CHEBI:30616"/>
        <label>1</label>
    </ligand>
</feature>
<feature type="binding site" evidence="5">
    <location>
        <begin position="458"/>
        <end position="465"/>
    </location>
    <ligand>
        <name>ATP</name>
        <dbReference type="ChEBI" id="CHEBI:30616"/>
        <label>1</label>
    </ligand>
</feature>
<feature type="binding site" evidence="2">
    <location>
        <position position="493"/>
    </location>
    <ligand>
        <name>ATP</name>
        <dbReference type="ChEBI" id="CHEBI:30616"/>
        <label>1</label>
    </ligand>
</feature>
<feature type="binding site" evidence="1">
    <location>
        <position position="1219"/>
    </location>
    <ligand>
        <name>ATP</name>
        <dbReference type="ChEBI" id="CHEBI:30616"/>
        <label>2</label>
    </ligand>
</feature>
<feature type="binding site" evidence="5">
    <location>
        <begin position="1244"/>
        <end position="1251"/>
    </location>
    <ligand>
        <name>ATP</name>
        <dbReference type="ChEBI" id="CHEBI:30616"/>
        <label>2</label>
    </ligand>
</feature>
<feature type="modified residue" description="Phosphoserine" evidence="1">
    <location>
        <position position="549"/>
    </location>
</feature>
<feature type="modified residue" description="Phosphoserine" evidence="1">
    <location>
        <position position="660"/>
    </location>
</feature>
<feature type="modified residue" description="Phosphoserine; by PKA" evidence="1">
    <location>
        <position position="670"/>
    </location>
</feature>
<feature type="modified residue" description="Phosphoserine" evidence="1">
    <location>
        <position position="686"/>
    </location>
</feature>
<feature type="modified residue" description="Phosphoserine" evidence="1">
    <location>
        <position position="700"/>
    </location>
</feature>
<feature type="modified residue" description="Phosphoserine" evidence="1">
    <location>
        <position position="712"/>
    </location>
</feature>
<feature type="modified residue" description="Phosphothreonine" evidence="1">
    <location>
        <position position="717"/>
    </location>
</feature>
<feature type="modified residue" description="Phosphoserine" evidence="1">
    <location>
        <position position="737"/>
    </location>
</feature>
<feature type="modified residue" description="Phosphoserine" evidence="1">
    <location>
        <position position="753"/>
    </location>
</feature>
<feature type="modified residue" description="Phosphoserine" evidence="1">
    <location>
        <position position="768"/>
    </location>
</feature>
<feature type="modified residue" description="Phosphoserine" evidence="1">
    <location>
        <position position="790"/>
    </location>
</feature>
<feature type="modified residue" description="Phosphoserine" evidence="1">
    <location>
        <position position="795"/>
    </location>
</feature>
<feature type="modified residue" description="Phosphoserine" evidence="1">
    <location>
        <position position="813"/>
    </location>
</feature>
<feature type="modified residue" description="Phosphoserine" evidence="1">
    <location>
        <position position="1444"/>
    </location>
</feature>
<feature type="modified residue" description="Phosphoserine" evidence="1">
    <location>
        <position position="1456"/>
    </location>
</feature>
<feature type="lipid moiety-binding region" description="S-palmitoyl cysteine" evidence="1">
    <location>
        <position position="524"/>
    </location>
</feature>
<feature type="lipid moiety-binding region" description="S-palmitoyl cysteine" evidence="1">
    <location>
        <position position="1395"/>
    </location>
</feature>
<feature type="glycosylation site" description="N-linked (GlcNAc...) asparagine" evidence="4">
    <location>
        <position position="894"/>
    </location>
</feature>
<feature type="glycosylation site" description="N-linked (GlcNAc...) asparagine" evidence="4">
    <location>
        <position position="900"/>
    </location>
</feature>
<feature type="glycosylation site" description="N-linked (GlcNAc...) asparagine" evidence="4">
    <location>
        <position position="909"/>
    </location>
</feature>
<feature type="cross-link" description="Glycyl lysine isopeptide (Lys-Gly) (interchain with G-Cter in ubiquitin)" evidence="1">
    <location>
        <position position="688"/>
    </location>
</feature>
<accession>Q09YK5</accession>